<organism>
    <name type="scientific">Yersinia pseudotuberculosis serotype IB (strain PB1/+)</name>
    <dbReference type="NCBI Taxonomy" id="502801"/>
    <lineage>
        <taxon>Bacteria</taxon>
        <taxon>Pseudomonadati</taxon>
        <taxon>Pseudomonadota</taxon>
        <taxon>Gammaproteobacteria</taxon>
        <taxon>Enterobacterales</taxon>
        <taxon>Yersiniaceae</taxon>
        <taxon>Yersinia</taxon>
    </lineage>
</organism>
<feature type="chain" id="PRO_1000092662" description="Ribosomal RNA small subunit methyltransferase G">
    <location>
        <begin position="1"/>
        <end position="206"/>
    </location>
</feature>
<feature type="binding site" evidence="1">
    <location>
        <position position="73"/>
    </location>
    <ligand>
        <name>S-adenosyl-L-methionine</name>
        <dbReference type="ChEBI" id="CHEBI:59789"/>
    </ligand>
</feature>
<feature type="binding site" evidence="1">
    <location>
        <position position="78"/>
    </location>
    <ligand>
        <name>S-adenosyl-L-methionine</name>
        <dbReference type="ChEBI" id="CHEBI:59789"/>
    </ligand>
</feature>
<feature type="binding site" evidence="1">
    <location>
        <begin position="124"/>
        <end position="125"/>
    </location>
    <ligand>
        <name>S-adenosyl-L-methionine</name>
        <dbReference type="ChEBI" id="CHEBI:59789"/>
    </ligand>
</feature>
<feature type="binding site" evidence="1">
    <location>
        <position position="139"/>
    </location>
    <ligand>
        <name>S-adenosyl-L-methionine</name>
        <dbReference type="ChEBI" id="CHEBI:59789"/>
    </ligand>
</feature>
<dbReference type="EC" id="2.1.1.170" evidence="1"/>
<dbReference type="EMBL" id="CP001048">
    <property type="protein sequence ID" value="ACC91115.1"/>
    <property type="molecule type" value="Genomic_DNA"/>
</dbReference>
<dbReference type="RefSeq" id="WP_002212261.1">
    <property type="nucleotide sequence ID" value="NZ_CP009780.1"/>
</dbReference>
<dbReference type="SMR" id="B2K7J3"/>
<dbReference type="GeneID" id="57974595"/>
<dbReference type="KEGG" id="ypb:YPTS_4172"/>
<dbReference type="PATRIC" id="fig|502801.10.peg.3643"/>
<dbReference type="GO" id="GO:0005829">
    <property type="term" value="C:cytosol"/>
    <property type="evidence" value="ECO:0007669"/>
    <property type="project" value="TreeGrafter"/>
</dbReference>
<dbReference type="GO" id="GO:0070043">
    <property type="term" value="F:rRNA (guanine-N7-)-methyltransferase activity"/>
    <property type="evidence" value="ECO:0007669"/>
    <property type="project" value="UniProtKB-UniRule"/>
</dbReference>
<dbReference type="CDD" id="cd02440">
    <property type="entry name" value="AdoMet_MTases"/>
    <property type="match status" value="1"/>
</dbReference>
<dbReference type="FunFam" id="3.40.50.150:FF:000032">
    <property type="entry name" value="Ribosomal RNA small subunit methyltransferase G"/>
    <property type="match status" value="1"/>
</dbReference>
<dbReference type="Gene3D" id="3.40.50.150">
    <property type="entry name" value="Vaccinia Virus protein VP39"/>
    <property type="match status" value="1"/>
</dbReference>
<dbReference type="HAMAP" id="MF_00074">
    <property type="entry name" value="16SrRNA_methyltr_G"/>
    <property type="match status" value="1"/>
</dbReference>
<dbReference type="InterPro" id="IPR003682">
    <property type="entry name" value="rRNA_ssu_MeTfrase_G"/>
</dbReference>
<dbReference type="InterPro" id="IPR029063">
    <property type="entry name" value="SAM-dependent_MTases_sf"/>
</dbReference>
<dbReference type="NCBIfam" id="TIGR00138">
    <property type="entry name" value="rsmG_gidB"/>
    <property type="match status" value="1"/>
</dbReference>
<dbReference type="PANTHER" id="PTHR31760">
    <property type="entry name" value="S-ADENOSYL-L-METHIONINE-DEPENDENT METHYLTRANSFERASES SUPERFAMILY PROTEIN"/>
    <property type="match status" value="1"/>
</dbReference>
<dbReference type="PANTHER" id="PTHR31760:SF0">
    <property type="entry name" value="S-ADENOSYL-L-METHIONINE-DEPENDENT METHYLTRANSFERASES SUPERFAMILY PROTEIN"/>
    <property type="match status" value="1"/>
</dbReference>
<dbReference type="Pfam" id="PF02527">
    <property type="entry name" value="GidB"/>
    <property type="match status" value="1"/>
</dbReference>
<dbReference type="PIRSF" id="PIRSF003078">
    <property type="entry name" value="GidB"/>
    <property type="match status" value="1"/>
</dbReference>
<dbReference type="SUPFAM" id="SSF53335">
    <property type="entry name" value="S-adenosyl-L-methionine-dependent methyltransferases"/>
    <property type="match status" value="1"/>
</dbReference>
<comment type="function">
    <text evidence="1">Specifically methylates the N7 position of guanine in position 527 of 16S rRNA.</text>
</comment>
<comment type="catalytic activity">
    <reaction evidence="1">
        <text>guanosine(527) in 16S rRNA + S-adenosyl-L-methionine = N(7)-methylguanosine(527) in 16S rRNA + S-adenosyl-L-homocysteine</text>
        <dbReference type="Rhea" id="RHEA:42732"/>
        <dbReference type="Rhea" id="RHEA-COMP:10209"/>
        <dbReference type="Rhea" id="RHEA-COMP:10210"/>
        <dbReference type="ChEBI" id="CHEBI:57856"/>
        <dbReference type="ChEBI" id="CHEBI:59789"/>
        <dbReference type="ChEBI" id="CHEBI:74269"/>
        <dbReference type="ChEBI" id="CHEBI:74480"/>
        <dbReference type="EC" id="2.1.1.170"/>
    </reaction>
</comment>
<comment type="subcellular location">
    <subcellularLocation>
        <location evidence="1">Cytoplasm</location>
    </subcellularLocation>
</comment>
<comment type="similarity">
    <text evidence="1">Belongs to the methyltransferase superfamily. RNA methyltransferase RsmG family.</text>
</comment>
<reference key="1">
    <citation type="submission" date="2008-04" db="EMBL/GenBank/DDBJ databases">
        <title>Complete sequence of Yersinia pseudotuberculosis PB1/+.</title>
        <authorList>
            <person name="Copeland A."/>
            <person name="Lucas S."/>
            <person name="Lapidus A."/>
            <person name="Glavina del Rio T."/>
            <person name="Dalin E."/>
            <person name="Tice H."/>
            <person name="Bruce D."/>
            <person name="Goodwin L."/>
            <person name="Pitluck S."/>
            <person name="Munk A.C."/>
            <person name="Brettin T."/>
            <person name="Detter J.C."/>
            <person name="Han C."/>
            <person name="Tapia R."/>
            <person name="Schmutz J."/>
            <person name="Larimer F."/>
            <person name="Land M."/>
            <person name="Hauser L."/>
            <person name="Challacombe J.F."/>
            <person name="Green L."/>
            <person name="Lindler L.E."/>
            <person name="Nikolich M.P."/>
            <person name="Richardson P."/>
        </authorList>
    </citation>
    <scope>NUCLEOTIDE SEQUENCE [LARGE SCALE GENOMIC DNA]</scope>
    <source>
        <strain>PB1/+</strain>
    </source>
</reference>
<proteinExistence type="inferred from homology"/>
<gene>
    <name evidence="1" type="primary">rsmG</name>
    <name type="ordered locus">YPTS_4172</name>
</gene>
<name>RSMG_YERPB</name>
<accession>B2K7J3</accession>
<sequence>MLKKLDSLLTVAGITLPDQQKHQLIGYVELLDKWNKAYNLTSVRDPQQMLVRHILDSIVVNPHLQGSRFIDVGTGPGLPGIPLAIVRPDAHFTLLDSLGKRVRFLRQVQHELGLNNIEPVQSRVEAFTSEPPFDGVISRAFASLQDMLSWCHHLPAKPEGRFYALKGVRPDDELAVLPEDIVLESVIKLDVPELDGERHLIILKSN</sequence>
<protein>
    <recommendedName>
        <fullName evidence="1">Ribosomal RNA small subunit methyltransferase G</fullName>
        <ecNumber evidence="1">2.1.1.170</ecNumber>
    </recommendedName>
    <alternativeName>
        <fullName evidence="1">16S rRNA 7-methylguanosine methyltransferase</fullName>
        <shortName evidence="1">16S rRNA m7G methyltransferase</shortName>
    </alternativeName>
</protein>
<evidence type="ECO:0000255" key="1">
    <source>
        <dbReference type="HAMAP-Rule" id="MF_00074"/>
    </source>
</evidence>
<keyword id="KW-0963">Cytoplasm</keyword>
<keyword id="KW-0489">Methyltransferase</keyword>
<keyword id="KW-0698">rRNA processing</keyword>
<keyword id="KW-0949">S-adenosyl-L-methionine</keyword>
<keyword id="KW-0808">Transferase</keyword>